<feature type="chain" id="PRO_0000066130" description="Uncharacterized 31.6 kDa protein in atpI 5'region">
    <location>
        <begin position="1"/>
        <end position="284"/>
    </location>
</feature>
<feature type="domain" description="Photolyase/cryptochrome alpha/beta">
    <location>
        <begin position="4"/>
        <end position="133"/>
    </location>
</feature>
<organism>
    <name type="scientific">Synechococcus sp. (strain PCC 6716)</name>
    <dbReference type="NCBI Taxonomy" id="32048"/>
    <lineage>
        <taxon>Bacteria</taxon>
        <taxon>Bacillati</taxon>
        <taxon>Cyanobacteriota</taxon>
        <taxon>Cyanophyceae</taxon>
        <taxon>Synechococcales</taxon>
        <taxon>Synechococcaceae</taxon>
        <taxon>Synechococcus</taxon>
    </lineage>
</organism>
<dbReference type="EMBL" id="X70431">
    <property type="protein sequence ID" value="CAA49877.1"/>
    <property type="molecule type" value="Genomic_DNA"/>
</dbReference>
<dbReference type="SMR" id="Q05380"/>
<dbReference type="GO" id="GO:0003904">
    <property type="term" value="F:deoxyribodipyrimidine photo-lyase activity"/>
    <property type="evidence" value="ECO:0007669"/>
    <property type="project" value="TreeGrafter"/>
</dbReference>
<dbReference type="GO" id="GO:0003677">
    <property type="term" value="F:DNA binding"/>
    <property type="evidence" value="ECO:0007669"/>
    <property type="project" value="TreeGrafter"/>
</dbReference>
<dbReference type="GO" id="GO:0071949">
    <property type="term" value="F:FAD binding"/>
    <property type="evidence" value="ECO:0007669"/>
    <property type="project" value="TreeGrafter"/>
</dbReference>
<dbReference type="GO" id="GO:0009416">
    <property type="term" value="P:response to light stimulus"/>
    <property type="evidence" value="ECO:0007669"/>
    <property type="project" value="TreeGrafter"/>
</dbReference>
<dbReference type="Gene3D" id="1.25.40.80">
    <property type="match status" value="1"/>
</dbReference>
<dbReference type="Gene3D" id="3.40.50.620">
    <property type="entry name" value="HUPs"/>
    <property type="match status" value="1"/>
</dbReference>
<dbReference type="InterPro" id="IPR036134">
    <property type="entry name" value="Crypto/Photolyase_FAD-like_sf"/>
</dbReference>
<dbReference type="InterPro" id="IPR036155">
    <property type="entry name" value="Crypto/Photolyase_N_sf"/>
</dbReference>
<dbReference type="InterPro" id="IPR002081">
    <property type="entry name" value="Cryptochrome/DNA_photolyase_1"/>
</dbReference>
<dbReference type="InterPro" id="IPR006050">
    <property type="entry name" value="DNA_photolyase_N"/>
</dbReference>
<dbReference type="InterPro" id="IPR014729">
    <property type="entry name" value="Rossmann-like_a/b/a_fold"/>
</dbReference>
<dbReference type="PANTHER" id="PTHR11455">
    <property type="entry name" value="CRYPTOCHROME"/>
    <property type="match status" value="1"/>
</dbReference>
<dbReference type="PANTHER" id="PTHR11455:SF9">
    <property type="entry name" value="CRYPTOCHROME CIRCADIAN CLOCK 5 ISOFORM X1"/>
    <property type="match status" value="1"/>
</dbReference>
<dbReference type="Pfam" id="PF00875">
    <property type="entry name" value="DNA_photolyase"/>
    <property type="match status" value="1"/>
</dbReference>
<dbReference type="SUPFAM" id="SSF48173">
    <property type="entry name" value="Cryptochrome/photolyase FAD-binding domain"/>
    <property type="match status" value="1"/>
</dbReference>
<dbReference type="SUPFAM" id="SSF52425">
    <property type="entry name" value="Cryptochrome/photolyase, N-terminal domain"/>
    <property type="match status" value="1"/>
</dbReference>
<dbReference type="PROSITE" id="PS51645">
    <property type="entry name" value="PHR_CRY_ALPHA_BETA"/>
    <property type="match status" value="1"/>
</dbReference>
<reference key="1">
    <citation type="journal article" date="1993" name="Biochem. J.">
        <title>Organization and sequences of genes for the subunits of ATP synthase in the thermophilic cyanobacterium Synechococcus 6716.</title>
        <authorList>
            <person name="van Walraven H.S."/>
            <person name="Lutter R."/>
            <person name="Walker J.E."/>
        </authorList>
    </citation>
    <scope>NUCLEOTIDE SEQUENCE [GENOMIC DNA]</scope>
</reference>
<name>YAT1_SYNP1</name>
<accession>Q05380</accession>
<proteinExistence type="predicted"/>
<protein>
    <recommendedName>
        <fullName>Uncharacterized 31.6 kDa protein in atpI 5'region</fullName>
    </recommendedName>
    <alternativeName>
        <fullName>URF1</fullName>
    </alternativeName>
</protein>
<sequence>MSYPLHLFWHRRDLRLADNLGLYAARQHTPTVVGVFCFDPALLQGQDVAAVRVAYLLGCLQALKEAYQQRGGCLLMVQGDPRQVIPEVATTLKATAVHWHEDVEPYARERDRVVAATLNDLGIAVHRQWDQLLHPPSAVQTQQGQPYTVYTPFWRNWSALPKAAPVPPPPDFAPLEATEIASIPLPSTHDLGFDWSGELILAPGEAAAAQQLAHFSQHAIYEYGEQRNYPGRPGTALLSPALKFGVIGIRTVWAASEAALEHARSDEARASIRTWQQELAWREF</sequence>